<protein>
    <recommendedName>
        <fullName evidence="1">Photosystem II reaction center protein J</fullName>
        <shortName evidence="1">PSII-J</shortName>
    </recommendedName>
</protein>
<accession>P49512</accession>
<organism>
    <name type="scientific">Trieres chinensis</name>
    <name type="common">Marine centric diatom</name>
    <name type="synonym">Odontella sinensis</name>
    <dbReference type="NCBI Taxonomy" id="1514140"/>
    <lineage>
        <taxon>Eukaryota</taxon>
        <taxon>Sar</taxon>
        <taxon>Stramenopiles</taxon>
        <taxon>Ochrophyta</taxon>
        <taxon>Bacillariophyta</taxon>
        <taxon>Mediophyceae</taxon>
        <taxon>Biddulphiophycidae</taxon>
        <taxon>Eupodiscales</taxon>
        <taxon>Parodontellaceae</taxon>
        <taxon>Trieres</taxon>
    </lineage>
</organism>
<evidence type="ECO:0000255" key="1">
    <source>
        <dbReference type="HAMAP-Rule" id="MF_01305"/>
    </source>
</evidence>
<dbReference type="EMBL" id="Z67753">
    <property type="protein sequence ID" value="CAA91713.1"/>
    <property type="molecule type" value="Genomic_DNA"/>
</dbReference>
<dbReference type="PIR" id="S78340">
    <property type="entry name" value="S78340"/>
</dbReference>
<dbReference type="RefSeq" id="NP_043681.1">
    <property type="nucleotide sequence ID" value="NC_001713.1"/>
</dbReference>
<dbReference type="SMR" id="P49512"/>
<dbReference type="GeneID" id="801714"/>
<dbReference type="GO" id="GO:0009535">
    <property type="term" value="C:chloroplast thylakoid membrane"/>
    <property type="evidence" value="ECO:0007669"/>
    <property type="project" value="UniProtKB-SubCell"/>
</dbReference>
<dbReference type="GO" id="GO:0009539">
    <property type="term" value="C:photosystem II reaction center"/>
    <property type="evidence" value="ECO:0007669"/>
    <property type="project" value="InterPro"/>
</dbReference>
<dbReference type="GO" id="GO:0015979">
    <property type="term" value="P:photosynthesis"/>
    <property type="evidence" value="ECO:0007669"/>
    <property type="project" value="UniProtKB-UniRule"/>
</dbReference>
<dbReference type="Gene3D" id="6.10.250.2070">
    <property type="match status" value="1"/>
</dbReference>
<dbReference type="HAMAP" id="MF_01305">
    <property type="entry name" value="PSII_PsbJ"/>
    <property type="match status" value="1"/>
</dbReference>
<dbReference type="InterPro" id="IPR002682">
    <property type="entry name" value="PSII_PsbJ"/>
</dbReference>
<dbReference type="InterPro" id="IPR037267">
    <property type="entry name" value="PSII_PsbJ_sf"/>
</dbReference>
<dbReference type="NCBIfam" id="NF002722">
    <property type="entry name" value="PRK02565.1"/>
    <property type="match status" value="1"/>
</dbReference>
<dbReference type="PANTHER" id="PTHR34812">
    <property type="entry name" value="PHOTOSYSTEM II REACTION CENTER PROTEIN J"/>
    <property type="match status" value="1"/>
</dbReference>
<dbReference type="PANTHER" id="PTHR34812:SF3">
    <property type="entry name" value="PHOTOSYSTEM II REACTION CENTER PROTEIN J"/>
    <property type="match status" value="1"/>
</dbReference>
<dbReference type="Pfam" id="PF01788">
    <property type="entry name" value="PsbJ"/>
    <property type="match status" value="1"/>
</dbReference>
<dbReference type="SUPFAM" id="SSF161021">
    <property type="entry name" value="Photosystem II reaction center protein J, PsbJ"/>
    <property type="match status" value="1"/>
</dbReference>
<proteinExistence type="inferred from homology"/>
<geneLocation type="chloroplast"/>
<keyword id="KW-0150">Chloroplast</keyword>
<keyword id="KW-0472">Membrane</keyword>
<keyword id="KW-0602">Photosynthesis</keyword>
<keyword id="KW-0604">Photosystem II</keyword>
<keyword id="KW-0934">Plastid</keyword>
<keyword id="KW-0674">Reaction center</keyword>
<keyword id="KW-0793">Thylakoid</keyword>
<keyword id="KW-0812">Transmembrane</keyword>
<keyword id="KW-1133">Transmembrane helix</keyword>
<sequence length="39" mass="4029">MSNTGRIPLWLVGLVGGLAVITMLSLFLYGAYSGLGSSL</sequence>
<reference key="1">
    <citation type="journal article" date="1995" name="Plant Mol. Biol. Rep.">
        <title>The chloroplast genome of a chlorophyll a+c-containing alga, Odontella sinensis.</title>
        <authorList>
            <person name="Kowallik K.V."/>
            <person name="Stoebe B."/>
            <person name="Schaffran I."/>
            <person name="Kroth-Pancic P."/>
            <person name="Freier U."/>
        </authorList>
    </citation>
    <scope>NUCLEOTIDE SEQUENCE [LARGE SCALE GENOMIC DNA]</scope>
</reference>
<name>PSBJ_TRICV</name>
<comment type="function">
    <text evidence="1">One of the components of the core complex of photosystem II (PSII). PSII is a light-driven water:plastoquinone oxidoreductase that uses light energy to abstract electrons from H(2)O, generating O(2) and a proton gradient subsequently used for ATP formation. It consists of a core antenna complex that captures photons, and an electron transfer chain that converts photonic excitation into a charge separation.</text>
</comment>
<comment type="subunit">
    <text evidence="1">PSII is composed of 1 copy each of membrane proteins PsbA, PsbB, PsbC, PsbD, PsbE, PsbF, PsbH, PsbI, PsbJ, PsbK, PsbL, PsbM, PsbT, PsbX, PsbY, PsbZ, Psb30/Ycf12, at least 3 peripheral proteins of the oxygen-evolving complex and a large number of cofactors. It forms dimeric complexes.</text>
</comment>
<comment type="subcellular location">
    <subcellularLocation>
        <location evidence="1">Plastid</location>
        <location evidence="1">Chloroplast thylakoid membrane</location>
        <topology evidence="1">Single-pass membrane protein</topology>
    </subcellularLocation>
</comment>
<comment type="similarity">
    <text evidence="1">Belongs to the PsbJ family.</text>
</comment>
<feature type="chain" id="PRO_0000216604" description="Photosystem II reaction center protein J">
    <location>
        <begin position="1"/>
        <end position="39"/>
    </location>
</feature>
<feature type="transmembrane region" description="Helical" evidence="1">
    <location>
        <begin position="7"/>
        <end position="27"/>
    </location>
</feature>
<gene>
    <name evidence="1" type="primary">psbJ</name>
</gene>